<gene>
    <name evidence="1" type="primary">csrA</name>
    <name type="ordered locus">Sfri_1064</name>
</gene>
<organism>
    <name type="scientific">Shewanella frigidimarina (strain NCIMB 400)</name>
    <dbReference type="NCBI Taxonomy" id="318167"/>
    <lineage>
        <taxon>Bacteria</taxon>
        <taxon>Pseudomonadati</taxon>
        <taxon>Pseudomonadota</taxon>
        <taxon>Gammaproteobacteria</taxon>
        <taxon>Alteromonadales</taxon>
        <taxon>Shewanellaceae</taxon>
        <taxon>Shewanella</taxon>
    </lineage>
</organism>
<feature type="chain" id="PRO_1000023419" description="Translational regulator CsrA">
    <location>
        <begin position="1"/>
        <end position="65"/>
    </location>
</feature>
<protein>
    <recommendedName>
        <fullName evidence="1">Translational regulator CsrA</fullName>
    </recommendedName>
    <alternativeName>
        <fullName evidence="1">Carbon storage regulator</fullName>
    </alternativeName>
</protein>
<accession>Q085Z8</accession>
<sequence>MLILTRRVGETLMIGDEVTVTVLGVKGNQVRIGVNAPKEVSVHREEIYQRIQSEKSGTPSEGGNY</sequence>
<comment type="function">
    <text evidence="1">A key translational regulator that binds mRNA to regulate translation initiation and/or mRNA stability. Mediates global changes in gene expression, shifting from rapid growth to stress survival by linking envelope stress, the stringent response and the catabolite repression systems. Usually binds in the 5'-UTR; binding at or near the Shine-Dalgarno sequence prevents ribosome-binding, repressing translation, binding elsewhere in the 5'-UTR can activate translation and/or stabilize the mRNA. Its function is antagonized by small RNA(s).</text>
</comment>
<comment type="subunit">
    <text evidence="1">Homodimer; the beta-strands of each monomer intercalate to form a hydrophobic core, while the alpha-helices form wings that extend away from the core.</text>
</comment>
<comment type="subcellular location">
    <subcellularLocation>
        <location evidence="1">Cytoplasm</location>
    </subcellularLocation>
</comment>
<comment type="similarity">
    <text evidence="1">Belongs to the CsrA/RsmA family.</text>
</comment>
<name>CSRA_SHEFN</name>
<reference key="1">
    <citation type="submission" date="2006-08" db="EMBL/GenBank/DDBJ databases">
        <title>Complete sequence of Shewanella frigidimarina NCIMB 400.</title>
        <authorList>
            <consortium name="US DOE Joint Genome Institute"/>
            <person name="Copeland A."/>
            <person name="Lucas S."/>
            <person name="Lapidus A."/>
            <person name="Barry K."/>
            <person name="Detter J.C."/>
            <person name="Glavina del Rio T."/>
            <person name="Hammon N."/>
            <person name="Israni S."/>
            <person name="Dalin E."/>
            <person name="Tice H."/>
            <person name="Pitluck S."/>
            <person name="Fredrickson J.K."/>
            <person name="Kolker E."/>
            <person name="McCuel L.A."/>
            <person name="DiChristina T."/>
            <person name="Nealson K.H."/>
            <person name="Newman D."/>
            <person name="Tiedje J.M."/>
            <person name="Zhou J."/>
            <person name="Romine M.F."/>
            <person name="Culley D.E."/>
            <person name="Serres M."/>
            <person name="Chertkov O."/>
            <person name="Brettin T."/>
            <person name="Bruce D."/>
            <person name="Han C."/>
            <person name="Tapia R."/>
            <person name="Gilna P."/>
            <person name="Schmutz J."/>
            <person name="Larimer F."/>
            <person name="Land M."/>
            <person name="Hauser L."/>
            <person name="Kyrpides N."/>
            <person name="Mikhailova N."/>
            <person name="Richardson P."/>
        </authorList>
    </citation>
    <scope>NUCLEOTIDE SEQUENCE [LARGE SCALE GENOMIC DNA]</scope>
    <source>
        <strain>NCIMB 400</strain>
    </source>
</reference>
<dbReference type="EMBL" id="CP000447">
    <property type="protein sequence ID" value="ABI70917.1"/>
    <property type="molecule type" value="Genomic_DNA"/>
</dbReference>
<dbReference type="RefSeq" id="WP_011636538.1">
    <property type="nucleotide sequence ID" value="NC_008345.1"/>
</dbReference>
<dbReference type="SMR" id="Q085Z8"/>
<dbReference type="STRING" id="318167.Sfri_1064"/>
<dbReference type="GeneID" id="90571195"/>
<dbReference type="KEGG" id="sfr:Sfri_1064"/>
<dbReference type="eggNOG" id="COG1551">
    <property type="taxonomic scope" value="Bacteria"/>
</dbReference>
<dbReference type="HOGENOM" id="CLU_164837_2_2_6"/>
<dbReference type="OrthoDB" id="9809061at2"/>
<dbReference type="Proteomes" id="UP000000684">
    <property type="component" value="Chromosome"/>
</dbReference>
<dbReference type="GO" id="GO:0005829">
    <property type="term" value="C:cytosol"/>
    <property type="evidence" value="ECO:0007669"/>
    <property type="project" value="TreeGrafter"/>
</dbReference>
<dbReference type="GO" id="GO:0048027">
    <property type="term" value="F:mRNA 5'-UTR binding"/>
    <property type="evidence" value="ECO:0007669"/>
    <property type="project" value="UniProtKB-UniRule"/>
</dbReference>
<dbReference type="GO" id="GO:0006402">
    <property type="term" value="P:mRNA catabolic process"/>
    <property type="evidence" value="ECO:0007669"/>
    <property type="project" value="InterPro"/>
</dbReference>
<dbReference type="GO" id="GO:0045947">
    <property type="term" value="P:negative regulation of translational initiation"/>
    <property type="evidence" value="ECO:0007669"/>
    <property type="project" value="UniProtKB-UniRule"/>
</dbReference>
<dbReference type="GO" id="GO:0045948">
    <property type="term" value="P:positive regulation of translational initiation"/>
    <property type="evidence" value="ECO:0007669"/>
    <property type="project" value="UniProtKB-UniRule"/>
</dbReference>
<dbReference type="GO" id="GO:0006109">
    <property type="term" value="P:regulation of carbohydrate metabolic process"/>
    <property type="evidence" value="ECO:0007669"/>
    <property type="project" value="UniProtKB-UniRule"/>
</dbReference>
<dbReference type="FunFam" id="2.60.40.4380:FF:000001">
    <property type="entry name" value="Translational regulator CsrA"/>
    <property type="match status" value="1"/>
</dbReference>
<dbReference type="Gene3D" id="2.60.40.4380">
    <property type="entry name" value="Translational regulator CsrA"/>
    <property type="match status" value="1"/>
</dbReference>
<dbReference type="HAMAP" id="MF_00167">
    <property type="entry name" value="CsrA"/>
    <property type="match status" value="1"/>
</dbReference>
<dbReference type="InterPro" id="IPR003751">
    <property type="entry name" value="CsrA"/>
</dbReference>
<dbReference type="InterPro" id="IPR036107">
    <property type="entry name" value="CsrA_sf"/>
</dbReference>
<dbReference type="NCBIfam" id="TIGR00202">
    <property type="entry name" value="csrA"/>
    <property type="match status" value="1"/>
</dbReference>
<dbReference type="NCBIfam" id="NF002469">
    <property type="entry name" value="PRK01712.1"/>
    <property type="match status" value="1"/>
</dbReference>
<dbReference type="PANTHER" id="PTHR34984">
    <property type="entry name" value="CARBON STORAGE REGULATOR"/>
    <property type="match status" value="1"/>
</dbReference>
<dbReference type="PANTHER" id="PTHR34984:SF1">
    <property type="entry name" value="CARBON STORAGE REGULATOR"/>
    <property type="match status" value="1"/>
</dbReference>
<dbReference type="Pfam" id="PF02599">
    <property type="entry name" value="CsrA"/>
    <property type="match status" value="1"/>
</dbReference>
<dbReference type="SUPFAM" id="SSF117130">
    <property type="entry name" value="CsrA-like"/>
    <property type="match status" value="1"/>
</dbReference>
<keyword id="KW-0010">Activator</keyword>
<keyword id="KW-0963">Cytoplasm</keyword>
<keyword id="KW-1185">Reference proteome</keyword>
<keyword id="KW-0678">Repressor</keyword>
<keyword id="KW-0694">RNA-binding</keyword>
<keyword id="KW-0810">Translation regulation</keyword>
<evidence type="ECO:0000255" key="1">
    <source>
        <dbReference type="HAMAP-Rule" id="MF_00167"/>
    </source>
</evidence>
<proteinExistence type="inferred from homology"/>